<gene>
    <name evidence="1" type="primary">hutH</name>
    <name type="ordered locus">SSPA1829</name>
</gene>
<sequence length="506" mass="53841">MNTMTLTPGQLSLSQLYDVWRHPVQLRLDASAIDGINASVACVNDIVAEGRTAYGINTGFGLLAQTRIADEDLQNLQRSLVLSHAAGVGDPLDDAMVRLIMVLKINSLARGFSGIRLSVIEALIALVNAGVYPLIPAKGSVGASGDLAPLAHLSLTLLGEGKARWQGEWLPAQAALKKAGLEPVALAAKEGLALLNGTQASTAFALRGLFEAQELFASAVVCGALTTEAVLGSRRPFDARIHAARGQQGQIDAARLFRHLLTDTSAIAESHHHCHKVQDPYSLRCQPQVMGACLTQLRQTKEVLLAEANAVSDNPLVFADAGEVISGGNFHAEPVAMAADNLALAIAEIGALSERRIALMMDKHMSQLPPFLVKNGGVNSGFMIAQVTAAALASENKALAHPHSVDSLPTSANQEDHVSMAPAAGRRLWEMAANTRGIIAVEWLAACQGIDLREGLTSSPLLEQARQTLRERVAHYTQDRFFAPDIECATTLLAQGALQRLLPDFM</sequence>
<accession>B5BC34</accession>
<proteinExistence type="inferred from homology"/>
<reference key="1">
    <citation type="journal article" date="2009" name="BMC Genomics">
        <title>Pseudogene accumulation in the evolutionary histories of Salmonella enterica serovars Paratyphi A and Typhi.</title>
        <authorList>
            <person name="Holt K.E."/>
            <person name="Thomson N.R."/>
            <person name="Wain J."/>
            <person name="Langridge G.C."/>
            <person name="Hasan R."/>
            <person name="Bhutta Z.A."/>
            <person name="Quail M.A."/>
            <person name="Norbertczak H."/>
            <person name="Walker D."/>
            <person name="Simmonds M."/>
            <person name="White B."/>
            <person name="Bason N."/>
            <person name="Mungall K."/>
            <person name="Dougan G."/>
            <person name="Parkhill J."/>
        </authorList>
    </citation>
    <scope>NUCLEOTIDE SEQUENCE [LARGE SCALE GENOMIC DNA]</scope>
    <source>
        <strain>AKU_12601</strain>
    </source>
</reference>
<name>HUTH_SALPK</name>
<dbReference type="EC" id="4.3.1.3" evidence="1"/>
<dbReference type="EMBL" id="FM200053">
    <property type="protein sequence ID" value="CAR60025.1"/>
    <property type="molecule type" value="Genomic_DNA"/>
</dbReference>
<dbReference type="RefSeq" id="WP_001095234.1">
    <property type="nucleotide sequence ID" value="NC_011147.1"/>
</dbReference>
<dbReference type="SMR" id="B5BC34"/>
<dbReference type="KEGG" id="sek:SSPA1829"/>
<dbReference type="HOGENOM" id="CLU_014801_4_0_6"/>
<dbReference type="UniPathway" id="UPA00379">
    <property type="reaction ID" value="UER00549"/>
</dbReference>
<dbReference type="Proteomes" id="UP000001869">
    <property type="component" value="Chromosome"/>
</dbReference>
<dbReference type="GO" id="GO:0005737">
    <property type="term" value="C:cytoplasm"/>
    <property type="evidence" value="ECO:0007669"/>
    <property type="project" value="UniProtKB-SubCell"/>
</dbReference>
<dbReference type="GO" id="GO:0004397">
    <property type="term" value="F:histidine ammonia-lyase activity"/>
    <property type="evidence" value="ECO:0007669"/>
    <property type="project" value="UniProtKB-UniRule"/>
</dbReference>
<dbReference type="GO" id="GO:0019556">
    <property type="term" value="P:L-histidine catabolic process to glutamate and formamide"/>
    <property type="evidence" value="ECO:0007669"/>
    <property type="project" value="UniProtKB-UniPathway"/>
</dbReference>
<dbReference type="GO" id="GO:0019557">
    <property type="term" value="P:L-histidine catabolic process to glutamate and formate"/>
    <property type="evidence" value="ECO:0007669"/>
    <property type="project" value="UniProtKB-UniPathway"/>
</dbReference>
<dbReference type="CDD" id="cd00332">
    <property type="entry name" value="PAL-HAL"/>
    <property type="match status" value="1"/>
</dbReference>
<dbReference type="FunFam" id="1.10.275.10:FF:000005">
    <property type="entry name" value="Histidine ammonia-lyase"/>
    <property type="match status" value="1"/>
</dbReference>
<dbReference type="FunFam" id="1.20.200.10:FF:000003">
    <property type="entry name" value="Histidine ammonia-lyase"/>
    <property type="match status" value="1"/>
</dbReference>
<dbReference type="Gene3D" id="1.20.200.10">
    <property type="entry name" value="Fumarase/aspartase (Central domain)"/>
    <property type="match status" value="1"/>
</dbReference>
<dbReference type="Gene3D" id="1.10.275.10">
    <property type="entry name" value="Fumarase/aspartase (N-terminal domain)"/>
    <property type="match status" value="1"/>
</dbReference>
<dbReference type="HAMAP" id="MF_00229">
    <property type="entry name" value="His_ammonia_lyase"/>
    <property type="match status" value="1"/>
</dbReference>
<dbReference type="InterPro" id="IPR001106">
    <property type="entry name" value="Aromatic_Lyase"/>
</dbReference>
<dbReference type="InterPro" id="IPR024083">
    <property type="entry name" value="Fumarase/histidase_N"/>
</dbReference>
<dbReference type="InterPro" id="IPR005921">
    <property type="entry name" value="HutH"/>
</dbReference>
<dbReference type="InterPro" id="IPR008948">
    <property type="entry name" value="L-Aspartase-like"/>
</dbReference>
<dbReference type="InterPro" id="IPR022313">
    <property type="entry name" value="Phe/His_NH3-lyase_AS"/>
</dbReference>
<dbReference type="NCBIfam" id="TIGR01225">
    <property type="entry name" value="hutH"/>
    <property type="match status" value="1"/>
</dbReference>
<dbReference type="NCBIfam" id="NF006871">
    <property type="entry name" value="PRK09367.1"/>
    <property type="match status" value="1"/>
</dbReference>
<dbReference type="PANTHER" id="PTHR10362">
    <property type="entry name" value="HISTIDINE AMMONIA-LYASE"/>
    <property type="match status" value="1"/>
</dbReference>
<dbReference type="Pfam" id="PF00221">
    <property type="entry name" value="Lyase_aromatic"/>
    <property type="match status" value="1"/>
</dbReference>
<dbReference type="SUPFAM" id="SSF48557">
    <property type="entry name" value="L-aspartase-like"/>
    <property type="match status" value="1"/>
</dbReference>
<dbReference type="PROSITE" id="PS00488">
    <property type="entry name" value="PAL_HISTIDASE"/>
    <property type="match status" value="1"/>
</dbReference>
<comment type="catalytic activity">
    <reaction evidence="1">
        <text>L-histidine = trans-urocanate + NH4(+)</text>
        <dbReference type="Rhea" id="RHEA:21232"/>
        <dbReference type="ChEBI" id="CHEBI:17771"/>
        <dbReference type="ChEBI" id="CHEBI:28938"/>
        <dbReference type="ChEBI" id="CHEBI:57595"/>
        <dbReference type="EC" id="4.3.1.3"/>
    </reaction>
</comment>
<comment type="pathway">
    <text evidence="1">Amino-acid degradation; L-histidine degradation into L-glutamate; N-formimidoyl-L-glutamate from L-histidine: step 1/3.</text>
</comment>
<comment type="subcellular location">
    <subcellularLocation>
        <location evidence="1">Cytoplasm</location>
    </subcellularLocation>
</comment>
<comment type="PTM">
    <text evidence="1">Contains an active site 4-methylidene-imidazol-5-one (MIO), which is formed autocatalytically by cyclization and dehydration of residues Ala-Ser-Gly.</text>
</comment>
<comment type="similarity">
    <text evidence="1">Belongs to the PAL/histidase family.</text>
</comment>
<protein>
    <recommendedName>
        <fullName evidence="1">Histidine ammonia-lyase</fullName>
        <shortName evidence="1">Histidase</shortName>
        <ecNumber evidence="1">4.3.1.3</ecNumber>
    </recommendedName>
</protein>
<evidence type="ECO:0000255" key="1">
    <source>
        <dbReference type="HAMAP-Rule" id="MF_00229"/>
    </source>
</evidence>
<organism>
    <name type="scientific">Salmonella paratyphi A (strain AKU_12601)</name>
    <dbReference type="NCBI Taxonomy" id="554290"/>
    <lineage>
        <taxon>Bacteria</taxon>
        <taxon>Pseudomonadati</taxon>
        <taxon>Pseudomonadota</taxon>
        <taxon>Gammaproteobacteria</taxon>
        <taxon>Enterobacterales</taxon>
        <taxon>Enterobacteriaceae</taxon>
        <taxon>Salmonella</taxon>
    </lineage>
</organism>
<keyword id="KW-0963">Cytoplasm</keyword>
<keyword id="KW-0369">Histidine metabolism</keyword>
<keyword id="KW-0456">Lyase</keyword>
<feature type="chain" id="PRO_1000100452" description="Histidine ammonia-lyase">
    <location>
        <begin position="1"/>
        <end position="506"/>
    </location>
</feature>
<feature type="modified residue" description="2,3-didehydroalanine (Ser)" evidence="1">
    <location>
        <position position="144"/>
    </location>
</feature>
<feature type="cross-link" description="5-imidazolinone (Ala-Gly)" evidence="1">
    <location>
        <begin position="143"/>
        <end position="145"/>
    </location>
</feature>